<proteinExistence type="evidence at protein level"/>
<protein>
    <recommendedName>
        <fullName evidence="2">M-poneritoxin-Nc2a</fullName>
        <shortName evidence="2">M-PONTX-Nc2a</shortName>
    </recommendedName>
    <alternativeName>
        <fullName evidence="3">Poneratoxin</fullName>
    </alternativeName>
    <alternativeName>
        <fullName evidence="2">Ponericin Nc2a</fullName>
    </alternativeName>
</protein>
<reference key="1">
    <citation type="journal article" date="2021" name="Biochem. Pharmacol.">
        <title>Multipurpose peptides: the venoms of Amazonian stinging ants contain anthelmintic ponericins with diverse predatory and defensive activities.</title>
        <authorList>
            <person name="Nixon S.A."/>
            <person name="Robinson S.D."/>
            <person name="Agwa A.J."/>
            <person name="Walker A.A."/>
            <person name="Choudhary S."/>
            <person name="Touchard A."/>
            <person name="Undheim E.A.B."/>
            <person name="Robertson A."/>
            <person name="Vetter I."/>
            <person name="Schroeder C.I."/>
            <person name="Kotze A.C."/>
            <person name="Herzig V."/>
            <person name="King G.F."/>
        </authorList>
    </citation>
    <scope>PROTEIN SEQUENCE</scope>
    <scope>FUNCTION</scope>
    <scope>SUBCELLULAR LOCATION</scope>
    <scope>MASS SPECTROMETRY</scope>
    <scope>SYNTHESIS</scope>
    <scope>TOXIC DOSE</scope>
    <scope>BIOASSAY</scope>
    <source>
        <tissue>Venom</tissue>
    </source>
</reference>
<dbReference type="GO" id="GO:0005576">
    <property type="term" value="C:extracellular region"/>
    <property type="evidence" value="ECO:0007669"/>
    <property type="project" value="UniProtKB-SubCell"/>
</dbReference>
<dbReference type="GO" id="GO:0016020">
    <property type="term" value="C:membrane"/>
    <property type="evidence" value="ECO:0007669"/>
    <property type="project" value="UniProtKB-KW"/>
</dbReference>
<dbReference type="GO" id="GO:0044218">
    <property type="term" value="C:other organism cell membrane"/>
    <property type="evidence" value="ECO:0007669"/>
    <property type="project" value="UniProtKB-KW"/>
</dbReference>
<dbReference type="GO" id="GO:0090729">
    <property type="term" value="F:toxin activity"/>
    <property type="evidence" value="ECO:0007669"/>
    <property type="project" value="UniProtKB-KW"/>
</dbReference>
<dbReference type="GO" id="GO:0042742">
    <property type="term" value="P:defense response to bacterium"/>
    <property type="evidence" value="ECO:0007669"/>
    <property type="project" value="UniProtKB-KW"/>
</dbReference>
<evidence type="ECO:0000269" key="1">
    <source>
    </source>
</evidence>
<evidence type="ECO:0000303" key="2">
    <source>
    </source>
</evidence>
<evidence type="ECO:0000305" key="3"/>
<evidence type="ECO:0000305" key="4">
    <source>
    </source>
</evidence>
<name>LTX2A_NEOCU</name>
<feature type="peptide" id="PRO_0000454517" description="M-poneritoxin-Nc2a" evidence="1">
    <location>
        <begin position="1"/>
        <end position="25"/>
    </location>
</feature>
<keyword id="KW-0044">Antibiotic</keyword>
<keyword id="KW-0929">Antimicrobial</keyword>
<keyword id="KW-0903">Direct protein sequencing</keyword>
<keyword id="KW-0472">Membrane</keyword>
<keyword id="KW-0964">Secreted</keyword>
<keyword id="KW-1052">Target cell membrane</keyword>
<keyword id="KW-1053">Target membrane</keyword>
<keyword id="KW-0800">Toxin</keyword>
<accession>P0DV16</accession>
<sequence>FVKELWDKVKKMGSAAWSAAKGAFA</sequence>
<organism>
    <name type="scientific">Neoponera commutata</name>
    <name type="common">Large hunting ant</name>
    <name type="synonym">Pachycondyla commutata</name>
    <dbReference type="NCBI Taxonomy" id="613619"/>
    <lineage>
        <taxon>Eukaryota</taxon>
        <taxon>Metazoa</taxon>
        <taxon>Ecdysozoa</taxon>
        <taxon>Arthropoda</taxon>
        <taxon>Hexapoda</taxon>
        <taxon>Insecta</taxon>
        <taxon>Pterygota</taxon>
        <taxon>Neoptera</taxon>
        <taxon>Endopterygota</taxon>
        <taxon>Hymenoptera</taxon>
        <taxon>Apocrita</taxon>
        <taxon>Aculeata</taxon>
        <taxon>Formicoidea</taxon>
        <taxon>Formicidae</taxon>
        <taxon>Ponerinae</taxon>
        <taxon>Ponerini</taxon>
        <taxon>Pachycondyla</taxon>
    </lineage>
</organism>
<comment type="function">
    <text evidence="1">Membrane-perturbating peptide with multiple activities (PubMed:34302796). It is insecticidal, since it induces reversible paralysis in insects (L.cuprina) after 1 hour, but fails to kill them (PubMed:34302796). It shows moderate antibacterial activity against some Gram-positive and Gram-negative bacteria (PubMed:34302796). It is also antiparasitic, since it moderately inhibits the larval development of the major pathogenic nematode of ruminants (H.contortus, IC(50)=23.2 uM), but fails to reduce the motility of adult males of the other nematode B.malayi (PubMed:34302796). It also shows moderate cytotoxic activity against HEK293 cells (EC(50)=48-57 uM) but does not induce hemolysis in human erythrocytes (PubMed:34302796). It also causes a moderate increase in intracellular calcium concentration on neuronal and epithelial cell lines, which supports a non-specific membrane perturbation mechanism of action (PubMed:34302796).</text>
</comment>
<comment type="subcellular location">
    <subcellularLocation>
        <location evidence="1">Secreted</location>
    </subcellularLocation>
    <subcellularLocation>
        <location evidence="4">Target cell membrane</location>
    </subcellularLocation>
    <text evidence="4">Adopts an alpha-helical conformation in membrane-mimetic environments.</text>
</comment>
<comment type="tissue specificity">
    <text evidence="4">Expressed by the venom gland.</text>
</comment>
<comment type="mass spectrometry">
    <text>Monoisotopic mass.</text>
</comment>
<comment type="toxic dose">
    <text evidence="1">PD(50) is 38.1 nmol/g 1 hour after injection into L.cuprina. LD(50) is &gt;100 nmol/g 24 hours after injection into L.cuprina.</text>
</comment>
<comment type="similarity">
    <text evidence="3">Belongs to the ponericin-L family.</text>
</comment>